<gene>
    <name evidence="1" type="primary">nfuA</name>
    <name type="ordered locus">Pfl01_3104</name>
</gene>
<name>NFUA_PSEPF</name>
<keyword id="KW-0004">4Fe-4S</keyword>
<keyword id="KW-0408">Iron</keyword>
<keyword id="KW-0411">Iron-sulfur</keyword>
<keyword id="KW-0479">Metal-binding</keyword>
<evidence type="ECO:0000255" key="1">
    <source>
        <dbReference type="HAMAP-Rule" id="MF_01637"/>
    </source>
</evidence>
<organism>
    <name type="scientific">Pseudomonas fluorescens (strain Pf0-1)</name>
    <dbReference type="NCBI Taxonomy" id="205922"/>
    <lineage>
        <taxon>Bacteria</taxon>
        <taxon>Pseudomonadati</taxon>
        <taxon>Pseudomonadota</taxon>
        <taxon>Gammaproteobacteria</taxon>
        <taxon>Pseudomonadales</taxon>
        <taxon>Pseudomonadaceae</taxon>
        <taxon>Pseudomonas</taxon>
    </lineage>
</organism>
<reference key="1">
    <citation type="journal article" date="2009" name="Genome Biol.">
        <title>Genomic and genetic analyses of diversity and plant interactions of Pseudomonas fluorescens.</title>
        <authorList>
            <person name="Silby M.W."/>
            <person name="Cerdeno-Tarraga A.M."/>
            <person name="Vernikos G.S."/>
            <person name="Giddens S.R."/>
            <person name="Jackson R.W."/>
            <person name="Preston G.M."/>
            <person name="Zhang X.-X."/>
            <person name="Moon C.D."/>
            <person name="Gehrig S.M."/>
            <person name="Godfrey S.A.C."/>
            <person name="Knight C.G."/>
            <person name="Malone J.G."/>
            <person name="Robinson Z."/>
            <person name="Spiers A.J."/>
            <person name="Harris S."/>
            <person name="Challis G.L."/>
            <person name="Yaxley A.M."/>
            <person name="Harris D."/>
            <person name="Seeger K."/>
            <person name="Murphy L."/>
            <person name="Rutter S."/>
            <person name="Squares R."/>
            <person name="Quail M.A."/>
            <person name="Saunders E."/>
            <person name="Mavromatis K."/>
            <person name="Brettin T.S."/>
            <person name="Bentley S.D."/>
            <person name="Hothersall J."/>
            <person name="Stephens E."/>
            <person name="Thomas C.M."/>
            <person name="Parkhill J."/>
            <person name="Levy S.B."/>
            <person name="Rainey P.B."/>
            <person name="Thomson N.R."/>
        </authorList>
    </citation>
    <scope>NUCLEOTIDE SEQUENCE [LARGE SCALE GENOMIC DNA]</scope>
    <source>
        <strain>Pf0-1</strain>
    </source>
</reference>
<accession>Q3KBL2</accession>
<comment type="function">
    <text evidence="1">Involved in iron-sulfur cluster biogenesis. Binds a 4Fe-4S cluster, can transfer this cluster to apoproteins, and thereby intervenes in the maturation of Fe/S proteins. Could also act as a scaffold/chaperone for damaged Fe/S proteins.</text>
</comment>
<comment type="cofactor">
    <cofactor evidence="1">
        <name>[4Fe-4S] cluster</name>
        <dbReference type="ChEBI" id="CHEBI:49883"/>
    </cofactor>
    <text evidence="1">Binds 1 [4Fe-4S] cluster per subunit. The cluster is presumably bound at the interface of two monomers.</text>
</comment>
<comment type="subunit">
    <text evidence="1">Homodimer.</text>
</comment>
<comment type="similarity">
    <text evidence="1">Belongs to the NfuA family.</text>
</comment>
<dbReference type="EMBL" id="CP000094">
    <property type="protein sequence ID" value="ABA74842.1"/>
    <property type="molecule type" value="Genomic_DNA"/>
</dbReference>
<dbReference type="RefSeq" id="WP_007959519.1">
    <property type="nucleotide sequence ID" value="NC_007492.2"/>
</dbReference>
<dbReference type="SMR" id="Q3KBL2"/>
<dbReference type="KEGG" id="pfo:Pfl01_3104"/>
<dbReference type="eggNOG" id="COG0316">
    <property type="taxonomic scope" value="Bacteria"/>
</dbReference>
<dbReference type="eggNOG" id="COG0694">
    <property type="taxonomic scope" value="Bacteria"/>
</dbReference>
<dbReference type="HOGENOM" id="CLU_094569_0_0_6"/>
<dbReference type="Proteomes" id="UP000002704">
    <property type="component" value="Chromosome"/>
</dbReference>
<dbReference type="GO" id="GO:0051539">
    <property type="term" value="F:4 iron, 4 sulfur cluster binding"/>
    <property type="evidence" value="ECO:0007669"/>
    <property type="project" value="UniProtKB-UniRule"/>
</dbReference>
<dbReference type="GO" id="GO:0005506">
    <property type="term" value="F:iron ion binding"/>
    <property type="evidence" value="ECO:0007669"/>
    <property type="project" value="InterPro"/>
</dbReference>
<dbReference type="GO" id="GO:0016226">
    <property type="term" value="P:iron-sulfur cluster assembly"/>
    <property type="evidence" value="ECO:0007669"/>
    <property type="project" value="UniProtKB-UniRule"/>
</dbReference>
<dbReference type="GO" id="GO:0051604">
    <property type="term" value="P:protein maturation"/>
    <property type="evidence" value="ECO:0007669"/>
    <property type="project" value="UniProtKB-UniRule"/>
</dbReference>
<dbReference type="Gene3D" id="3.30.300.130">
    <property type="entry name" value="Fe-S cluster assembly (FSCA)"/>
    <property type="match status" value="1"/>
</dbReference>
<dbReference type="Gene3D" id="2.60.300.12">
    <property type="entry name" value="HesB-like domain"/>
    <property type="match status" value="1"/>
</dbReference>
<dbReference type="HAMAP" id="MF_01637">
    <property type="entry name" value="Fe_S_biogen_NfuA"/>
    <property type="match status" value="1"/>
</dbReference>
<dbReference type="InterPro" id="IPR017726">
    <property type="entry name" value="Fe/S_biogenesis_protein_NfuA"/>
</dbReference>
<dbReference type="InterPro" id="IPR000361">
    <property type="entry name" value="FeS_biogenesis"/>
</dbReference>
<dbReference type="InterPro" id="IPR034904">
    <property type="entry name" value="FSCA_dom_sf"/>
</dbReference>
<dbReference type="InterPro" id="IPR035903">
    <property type="entry name" value="HesB-like_dom_sf"/>
</dbReference>
<dbReference type="InterPro" id="IPR001075">
    <property type="entry name" value="NIF_FeS_clus_asmbl_NifU_C"/>
</dbReference>
<dbReference type="NCBIfam" id="TIGR03341">
    <property type="entry name" value="YhgI_GntY"/>
    <property type="match status" value="1"/>
</dbReference>
<dbReference type="PANTHER" id="PTHR11178:SF51">
    <property type="entry name" value="FE_S BIOGENESIS PROTEIN NFUA"/>
    <property type="match status" value="1"/>
</dbReference>
<dbReference type="PANTHER" id="PTHR11178">
    <property type="entry name" value="IRON-SULFUR CLUSTER SCAFFOLD PROTEIN NFU-RELATED"/>
    <property type="match status" value="1"/>
</dbReference>
<dbReference type="Pfam" id="PF01521">
    <property type="entry name" value="Fe-S_biosyn"/>
    <property type="match status" value="1"/>
</dbReference>
<dbReference type="Pfam" id="PF01106">
    <property type="entry name" value="NifU"/>
    <property type="match status" value="1"/>
</dbReference>
<dbReference type="SUPFAM" id="SSF117916">
    <property type="entry name" value="Fe-S cluster assembly (FSCA) domain-like"/>
    <property type="match status" value="1"/>
</dbReference>
<dbReference type="SUPFAM" id="SSF89360">
    <property type="entry name" value="HesB-like domain"/>
    <property type="match status" value="1"/>
</dbReference>
<protein>
    <recommendedName>
        <fullName evidence="1">Fe/S biogenesis protein NfuA</fullName>
    </recommendedName>
</protein>
<feature type="chain" id="PRO_1000215818" description="Fe/S biogenesis protein NfuA">
    <location>
        <begin position="1"/>
        <end position="194"/>
    </location>
</feature>
<feature type="binding site" evidence="1">
    <location>
        <position position="152"/>
    </location>
    <ligand>
        <name>[4Fe-4S] cluster</name>
        <dbReference type="ChEBI" id="CHEBI:49883"/>
    </ligand>
</feature>
<feature type="binding site" evidence="1">
    <location>
        <position position="155"/>
    </location>
    <ligand>
        <name>[4Fe-4S] cluster</name>
        <dbReference type="ChEBI" id="CHEBI:49883"/>
    </ligand>
</feature>
<proteinExistence type="inferred from homology"/>
<sequence>MTAITITDAAHDYLADLLSKQNTPGIGIRVFITQPGTQYAETCIAYCKPGEEKPEDTALGLKSFTAYIDSFSEAFLDDAVVDYATDRMGGQLTIKAPNAKVPMVNADSPINERINYYLQTEINPGLASHGGQVSLIDVVEDGIAVLQFGGGCQGCGQADVTLKEGIERTLLERIPELKGVRDVTDHTQKENAYY</sequence>